<sequence>MARCDVLVSADWAESNLHAPKVVFVEVDEDTSAYDRDHIAGAIKLDWRTDLQDPVKRDFVDAQQFSKLLSERGIANEDTVILYGGNNNWFAAYAYWYFKLYGHEKVKLLDGGRKKWELDGRPLSSDPVSRPVTSYTASPPDNTIRAFRDEVLAAINVKNLIDVRSPDEFSGKILAPAHLPQEQSQRPGHIPGAINVPWSRAANEDGTFKSDEELAKLYADAGLDNSKETIAYCRIGERSSHTWFVLRELLGHQNVKNYDGSWTEYGSLVGAPIELGS</sequence>
<keyword id="KW-1185">Reference proteome</keyword>
<keyword id="KW-0677">Repeat</keyword>
<keyword id="KW-0808">Transferase</keyword>
<protein>
    <recommendedName>
        <fullName>Putative thiosulfate sulfurtransferase 1</fullName>
        <ecNumber>2.8.1.1</ecNumber>
    </recommendedName>
    <alternativeName>
        <fullName>Rhodanese-like protein 1</fullName>
    </alternativeName>
</protein>
<name>THTR1_MYCBO</name>
<dbReference type="EC" id="2.8.1.1"/>
<dbReference type="EMBL" id="LT708304">
    <property type="protein sequence ID" value="SIT99437.1"/>
    <property type="molecule type" value="Genomic_DNA"/>
</dbReference>
<dbReference type="RefSeq" id="NP_854496.1">
    <property type="nucleotide sequence ID" value="NC_002945.3"/>
</dbReference>
<dbReference type="RefSeq" id="WP_003404293.1">
    <property type="nucleotide sequence ID" value="NC_002945.4"/>
</dbReference>
<dbReference type="SMR" id="P59989"/>
<dbReference type="KEGG" id="mbo:BQ2027_MB0838C"/>
<dbReference type="PATRIC" id="fig|233413.5.peg.911"/>
<dbReference type="Proteomes" id="UP000001419">
    <property type="component" value="Chromosome"/>
</dbReference>
<dbReference type="GO" id="GO:0004792">
    <property type="term" value="F:thiosulfate-cyanide sulfurtransferase activity"/>
    <property type="evidence" value="ECO:0007669"/>
    <property type="project" value="UniProtKB-EC"/>
</dbReference>
<dbReference type="CDD" id="cd01448">
    <property type="entry name" value="TST_Repeat_1"/>
    <property type="match status" value="1"/>
</dbReference>
<dbReference type="CDD" id="cd01449">
    <property type="entry name" value="TST_Repeat_2"/>
    <property type="match status" value="1"/>
</dbReference>
<dbReference type="FunFam" id="3.40.250.10:FF:000024">
    <property type="entry name" value="Sulfurtransferase"/>
    <property type="match status" value="1"/>
</dbReference>
<dbReference type="Gene3D" id="3.40.250.10">
    <property type="entry name" value="Rhodanese-like domain"/>
    <property type="match status" value="2"/>
</dbReference>
<dbReference type="InterPro" id="IPR001763">
    <property type="entry name" value="Rhodanese-like_dom"/>
</dbReference>
<dbReference type="InterPro" id="IPR036873">
    <property type="entry name" value="Rhodanese-like_dom_sf"/>
</dbReference>
<dbReference type="InterPro" id="IPR051126">
    <property type="entry name" value="Thiosulfate_sulfurtransferase"/>
</dbReference>
<dbReference type="InterPro" id="IPR001307">
    <property type="entry name" value="Thiosulphate_STrfase_CS"/>
</dbReference>
<dbReference type="PANTHER" id="PTHR43855">
    <property type="entry name" value="THIOSULFATE SULFURTRANSFERASE"/>
    <property type="match status" value="1"/>
</dbReference>
<dbReference type="PANTHER" id="PTHR43855:SF1">
    <property type="entry name" value="THIOSULFATE SULFURTRANSFERASE"/>
    <property type="match status" value="1"/>
</dbReference>
<dbReference type="Pfam" id="PF00581">
    <property type="entry name" value="Rhodanese"/>
    <property type="match status" value="2"/>
</dbReference>
<dbReference type="SMART" id="SM00450">
    <property type="entry name" value="RHOD"/>
    <property type="match status" value="2"/>
</dbReference>
<dbReference type="SUPFAM" id="SSF52821">
    <property type="entry name" value="Rhodanese/Cell cycle control phosphatase"/>
    <property type="match status" value="2"/>
</dbReference>
<dbReference type="PROSITE" id="PS00683">
    <property type="entry name" value="RHODANESE_2"/>
    <property type="match status" value="1"/>
</dbReference>
<dbReference type="PROSITE" id="PS50206">
    <property type="entry name" value="RHODANESE_3"/>
    <property type="match status" value="2"/>
</dbReference>
<accession>P59989</accession>
<accession>A0A1R3XWI9</accession>
<accession>X2BG48</accession>
<proteinExistence type="inferred from homology"/>
<organism>
    <name type="scientific">Mycobacterium bovis (strain ATCC BAA-935 / AF2122/97)</name>
    <dbReference type="NCBI Taxonomy" id="233413"/>
    <lineage>
        <taxon>Bacteria</taxon>
        <taxon>Bacillati</taxon>
        <taxon>Actinomycetota</taxon>
        <taxon>Actinomycetes</taxon>
        <taxon>Mycobacteriales</taxon>
        <taxon>Mycobacteriaceae</taxon>
        <taxon>Mycobacterium</taxon>
        <taxon>Mycobacterium tuberculosis complex</taxon>
    </lineage>
</organism>
<gene>
    <name type="primary">cysA1</name>
    <name type="ordered locus">BQ2027_MB0838C</name>
</gene>
<comment type="function">
    <text evidence="1">May be a sulfotransferase involved in the formation of thiosulfate.</text>
</comment>
<comment type="catalytic activity">
    <reaction>
        <text>thiosulfate + hydrogen cyanide = thiocyanate + sulfite + 2 H(+)</text>
        <dbReference type="Rhea" id="RHEA:16881"/>
        <dbReference type="ChEBI" id="CHEBI:15378"/>
        <dbReference type="ChEBI" id="CHEBI:17359"/>
        <dbReference type="ChEBI" id="CHEBI:18022"/>
        <dbReference type="ChEBI" id="CHEBI:18407"/>
        <dbReference type="ChEBI" id="CHEBI:33542"/>
        <dbReference type="EC" id="2.8.1.1"/>
    </reaction>
</comment>
<comment type="domain">
    <text evidence="1">Contains two rhodanese domains with different primary structures but with near identical secondary structure conformations suggesting a common evolutionary origin. Only the C-terminal rhodanese domain contains the catalytic cysteine residue (By similarity).</text>
</comment>
<reference key="1">
    <citation type="journal article" date="2003" name="Proc. Natl. Acad. Sci. U.S.A.">
        <title>The complete genome sequence of Mycobacterium bovis.</title>
        <authorList>
            <person name="Garnier T."/>
            <person name="Eiglmeier K."/>
            <person name="Camus J.-C."/>
            <person name="Medina N."/>
            <person name="Mansoor H."/>
            <person name="Pryor M."/>
            <person name="Duthoy S."/>
            <person name="Grondin S."/>
            <person name="Lacroix C."/>
            <person name="Monsempe C."/>
            <person name="Simon S."/>
            <person name="Harris B."/>
            <person name="Atkin R."/>
            <person name="Doggett J."/>
            <person name="Mayes R."/>
            <person name="Keating L."/>
            <person name="Wheeler P.R."/>
            <person name="Parkhill J."/>
            <person name="Barrell B.G."/>
            <person name="Cole S.T."/>
            <person name="Gordon S.V."/>
            <person name="Hewinson R.G."/>
        </authorList>
    </citation>
    <scope>NUCLEOTIDE SEQUENCE [LARGE SCALE GENOMIC DNA]</scope>
    <source>
        <strain>ATCC BAA-935 / AF2122/97</strain>
    </source>
</reference>
<reference key="2">
    <citation type="journal article" date="2017" name="Genome Announc.">
        <title>Updated reference genome sequence and annotation of Mycobacterium bovis AF2122/97.</title>
        <authorList>
            <person name="Malone K.M."/>
            <person name="Farrell D."/>
            <person name="Stuber T.P."/>
            <person name="Schubert O.T."/>
            <person name="Aebersold R."/>
            <person name="Robbe-Austerman S."/>
            <person name="Gordon S.V."/>
        </authorList>
    </citation>
    <scope>NUCLEOTIDE SEQUENCE [LARGE SCALE GENOMIC DNA]</scope>
    <scope>GENOME REANNOTATION</scope>
    <source>
        <strain>ATCC BAA-935 / AF2122/97</strain>
    </source>
</reference>
<feature type="chain" id="PRO_0000139412" description="Putative thiosulfate sulfurtransferase 1">
    <location>
        <begin position="1"/>
        <end position="277"/>
    </location>
</feature>
<feature type="domain" description="Rhodanese 1" evidence="2">
    <location>
        <begin position="18"/>
        <end position="125"/>
    </location>
</feature>
<feature type="domain" description="Rhodanese 2" evidence="2">
    <location>
        <begin position="154"/>
        <end position="274"/>
    </location>
</feature>
<feature type="active site" description="Cysteine persulfide intermediate" evidence="2">
    <location>
        <position position="233"/>
    </location>
</feature>
<feature type="binding site" evidence="1">
    <location>
        <position position="238"/>
    </location>
    <ligand>
        <name>substrate</name>
    </ligand>
</feature>
<evidence type="ECO:0000250" key="1"/>
<evidence type="ECO:0000255" key="2">
    <source>
        <dbReference type="PROSITE-ProRule" id="PRU00173"/>
    </source>
</evidence>